<name>RS7_PASMU</name>
<comment type="function">
    <text evidence="1">One of the primary rRNA binding proteins, it binds directly to 16S rRNA where it nucleates assembly of the head domain of the 30S subunit. Is located at the subunit interface close to the decoding center, probably blocks exit of the E-site tRNA.</text>
</comment>
<comment type="subunit">
    <text evidence="1">Part of the 30S ribosomal subunit. Contacts proteins S9 and S11.</text>
</comment>
<comment type="similarity">
    <text evidence="1">Belongs to the universal ribosomal protein uS7 family.</text>
</comment>
<proteinExistence type="inferred from homology"/>
<evidence type="ECO:0000255" key="1">
    <source>
        <dbReference type="HAMAP-Rule" id="MF_00480"/>
    </source>
</evidence>
<evidence type="ECO:0000305" key="2"/>
<protein>
    <recommendedName>
        <fullName evidence="1">Small ribosomal subunit protein uS7</fullName>
    </recommendedName>
    <alternativeName>
        <fullName evidence="2">30S ribosomal protein S7</fullName>
    </alternativeName>
</protein>
<sequence length="156" mass="17586">MPRRRSIEPRKILPDPKFGSELLAKFINVLMVDGKKSIAEKIVYSALDTLAQRTGKEALEAFEAALDNVRPTVEVKSRRVGGSTYQVPVEVRPVRRNALGMRWIVDAARKRGDKSMALRLANELSDASENKGAAVKKREDVHRMAEANKAFAHYRW</sequence>
<gene>
    <name evidence="1" type="primary">rpsG</name>
    <name evidence="1" type="synonym">rps7</name>
    <name type="ordered locus">PM1355</name>
</gene>
<reference key="1">
    <citation type="journal article" date="2001" name="Proc. Natl. Acad. Sci. U.S.A.">
        <title>Complete genomic sequence of Pasteurella multocida Pm70.</title>
        <authorList>
            <person name="May B.J."/>
            <person name="Zhang Q."/>
            <person name="Li L.L."/>
            <person name="Paustian M.L."/>
            <person name="Whittam T.S."/>
            <person name="Kapur V."/>
        </authorList>
    </citation>
    <scope>NUCLEOTIDE SEQUENCE [LARGE SCALE GENOMIC DNA]</scope>
    <source>
        <strain>Pm70</strain>
    </source>
</reference>
<keyword id="KW-1185">Reference proteome</keyword>
<keyword id="KW-0687">Ribonucleoprotein</keyword>
<keyword id="KW-0689">Ribosomal protein</keyword>
<keyword id="KW-0694">RNA-binding</keyword>
<keyword id="KW-0699">rRNA-binding</keyword>
<keyword id="KW-0820">tRNA-binding</keyword>
<feature type="chain" id="PRO_0000124314" description="Small ribosomal subunit protein uS7">
    <location>
        <begin position="1"/>
        <end position="156"/>
    </location>
</feature>
<dbReference type="EMBL" id="AE004439">
    <property type="protein sequence ID" value="AAK03439.1"/>
    <property type="molecule type" value="Genomic_DNA"/>
</dbReference>
<dbReference type="RefSeq" id="WP_005717859.1">
    <property type="nucleotide sequence ID" value="NC_002663.1"/>
</dbReference>
<dbReference type="SMR" id="Q9CL85"/>
<dbReference type="STRING" id="272843.PM1355"/>
<dbReference type="EnsemblBacteria" id="AAK03439">
    <property type="protein sequence ID" value="AAK03439"/>
    <property type="gene ID" value="PM1355"/>
</dbReference>
<dbReference type="GeneID" id="77206678"/>
<dbReference type="KEGG" id="pmu:PM1355"/>
<dbReference type="HOGENOM" id="CLU_072226_1_1_6"/>
<dbReference type="OrthoDB" id="9807653at2"/>
<dbReference type="Proteomes" id="UP000000809">
    <property type="component" value="Chromosome"/>
</dbReference>
<dbReference type="GO" id="GO:0015935">
    <property type="term" value="C:small ribosomal subunit"/>
    <property type="evidence" value="ECO:0007669"/>
    <property type="project" value="InterPro"/>
</dbReference>
<dbReference type="GO" id="GO:0019843">
    <property type="term" value="F:rRNA binding"/>
    <property type="evidence" value="ECO:0007669"/>
    <property type="project" value="UniProtKB-UniRule"/>
</dbReference>
<dbReference type="GO" id="GO:0003735">
    <property type="term" value="F:structural constituent of ribosome"/>
    <property type="evidence" value="ECO:0007669"/>
    <property type="project" value="InterPro"/>
</dbReference>
<dbReference type="GO" id="GO:0000049">
    <property type="term" value="F:tRNA binding"/>
    <property type="evidence" value="ECO:0007669"/>
    <property type="project" value="UniProtKB-UniRule"/>
</dbReference>
<dbReference type="GO" id="GO:0006412">
    <property type="term" value="P:translation"/>
    <property type="evidence" value="ECO:0007669"/>
    <property type="project" value="UniProtKB-UniRule"/>
</dbReference>
<dbReference type="CDD" id="cd14869">
    <property type="entry name" value="uS7_Bacteria"/>
    <property type="match status" value="1"/>
</dbReference>
<dbReference type="FunFam" id="1.10.455.10:FF:000001">
    <property type="entry name" value="30S ribosomal protein S7"/>
    <property type="match status" value="1"/>
</dbReference>
<dbReference type="Gene3D" id="1.10.455.10">
    <property type="entry name" value="Ribosomal protein S7 domain"/>
    <property type="match status" value="1"/>
</dbReference>
<dbReference type="HAMAP" id="MF_00480_B">
    <property type="entry name" value="Ribosomal_uS7_B"/>
    <property type="match status" value="1"/>
</dbReference>
<dbReference type="InterPro" id="IPR000235">
    <property type="entry name" value="Ribosomal_uS7"/>
</dbReference>
<dbReference type="InterPro" id="IPR005717">
    <property type="entry name" value="Ribosomal_uS7_bac/org-type"/>
</dbReference>
<dbReference type="InterPro" id="IPR020606">
    <property type="entry name" value="Ribosomal_uS7_CS"/>
</dbReference>
<dbReference type="InterPro" id="IPR023798">
    <property type="entry name" value="Ribosomal_uS7_dom"/>
</dbReference>
<dbReference type="InterPro" id="IPR036823">
    <property type="entry name" value="Ribosomal_uS7_dom_sf"/>
</dbReference>
<dbReference type="NCBIfam" id="TIGR01029">
    <property type="entry name" value="rpsG_bact"/>
    <property type="match status" value="1"/>
</dbReference>
<dbReference type="PANTHER" id="PTHR11205">
    <property type="entry name" value="RIBOSOMAL PROTEIN S7"/>
    <property type="match status" value="1"/>
</dbReference>
<dbReference type="Pfam" id="PF00177">
    <property type="entry name" value="Ribosomal_S7"/>
    <property type="match status" value="1"/>
</dbReference>
<dbReference type="PIRSF" id="PIRSF002122">
    <property type="entry name" value="RPS7p_RPS7a_RPS5e_RPS7o"/>
    <property type="match status" value="1"/>
</dbReference>
<dbReference type="SUPFAM" id="SSF47973">
    <property type="entry name" value="Ribosomal protein S7"/>
    <property type="match status" value="1"/>
</dbReference>
<dbReference type="PROSITE" id="PS00052">
    <property type="entry name" value="RIBOSOMAL_S7"/>
    <property type="match status" value="1"/>
</dbReference>
<accession>Q9CL85</accession>
<organism>
    <name type="scientific">Pasteurella multocida (strain Pm70)</name>
    <dbReference type="NCBI Taxonomy" id="272843"/>
    <lineage>
        <taxon>Bacteria</taxon>
        <taxon>Pseudomonadati</taxon>
        <taxon>Pseudomonadota</taxon>
        <taxon>Gammaproteobacteria</taxon>
        <taxon>Pasteurellales</taxon>
        <taxon>Pasteurellaceae</taxon>
        <taxon>Pasteurella</taxon>
    </lineage>
</organism>